<evidence type="ECO:0000250" key="1"/>
<evidence type="ECO:0000305" key="2"/>
<accession>P65725</accession>
<accession>A0A1R3XUK7</accession>
<accession>O07425</accession>
<accession>X2BEB5</accession>
<name>Y187_MYCBO</name>
<gene>
    <name type="ordered locus">BQ2027_MB0187C</name>
</gene>
<organism>
    <name type="scientific">Mycobacterium bovis (strain ATCC BAA-935 / AF2122/97)</name>
    <dbReference type="NCBI Taxonomy" id="233413"/>
    <lineage>
        <taxon>Bacteria</taxon>
        <taxon>Bacillati</taxon>
        <taxon>Actinomycetota</taxon>
        <taxon>Actinomycetes</taxon>
        <taxon>Mycobacteriales</taxon>
        <taxon>Mycobacteriaceae</taxon>
        <taxon>Mycobacterium</taxon>
        <taxon>Mycobacterium tuberculosis complex</taxon>
    </lineage>
</organism>
<keyword id="KW-0223">Dioxygenase</keyword>
<keyword id="KW-0479">Metal-binding</keyword>
<keyword id="KW-0560">Oxidoreductase</keyword>
<keyword id="KW-1185">Reference proteome</keyword>
<protein>
    <recommendedName>
        <fullName>Putative quercetin 2,3-dioxygenase Mb0187c</fullName>
        <shortName>Putative quercetinase</shortName>
        <ecNumber>1.13.11.24</ecNumber>
    </recommendedName>
    <alternativeName>
        <fullName>Pirin-like protein Mb0187c</fullName>
    </alternativeName>
</protein>
<sequence>MTATVEIRRAADRAVTTTSWLKSRHSFSFGDHYDPDNTHHGLLLVNNDDQMEPASGFDPHPHRDMEIVTWVLRGALRHQDSAGNSGVIYPGLAQRMSAGTGILHSEMNDSATEPVHFVQMWVIPDATGITASYQQQEIDDELLRAGLVTIASGIPGQDAALTLHNSSASLHGARLRPGATVSLPCAPFLHLFVAYGRLTLEGGGELADGDAVRFTDADARGLTANEPSEVLIWEMHAKLGDSAT</sequence>
<reference key="1">
    <citation type="journal article" date="2003" name="Proc. Natl. Acad. Sci. U.S.A.">
        <title>The complete genome sequence of Mycobacterium bovis.</title>
        <authorList>
            <person name="Garnier T."/>
            <person name="Eiglmeier K."/>
            <person name="Camus J.-C."/>
            <person name="Medina N."/>
            <person name="Mansoor H."/>
            <person name="Pryor M."/>
            <person name="Duthoy S."/>
            <person name="Grondin S."/>
            <person name="Lacroix C."/>
            <person name="Monsempe C."/>
            <person name="Simon S."/>
            <person name="Harris B."/>
            <person name="Atkin R."/>
            <person name="Doggett J."/>
            <person name="Mayes R."/>
            <person name="Keating L."/>
            <person name="Wheeler P.R."/>
            <person name="Parkhill J."/>
            <person name="Barrell B.G."/>
            <person name="Cole S.T."/>
            <person name="Gordon S.V."/>
            <person name="Hewinson R.G."/>
        </authorList>
    </citation>
    <scope>NUCLEOTIDE SEQUENCE [LARGE SCALE GENOMIC DNA]</scope>
    <source>
        <strain>ATCC BAA-935 / AF2122/97</strain>
    </source>
</reference>
<reference key="2">
    <citation type="journal article" date="2017" name="Genome Announc.">
        <title>Updated reference genome sequence and annotation of Mycobacterium bovis AF2122/97.</title>
        <authorList>
            <person name="Malone K.M."/>
            <person name="Farrell D."/>
            <person name="Stuber T.P."/>
            <person name="Schubert O.T."/>
            <person name="Aebersold R."/>
            <person name="Robbe-Austerman S."/>
            <person name="Gordon S.V."/>
        </authorList>
    </citation>
    <scope>NUCLEOTIDE SEQUENCE [LARGE SCALE GENOMIC DNA]</scope>
    <scope>GENOME REANNOTATION</scope>
    <source>
        <strain>ATCC BAA-935 / AF2122/97</strain>
    </source>
</reference>
<comment type="function">
    <text evidence="1">Putative quercetin 2,3-dioxygenase.</text>
</comment>
<comment type="catalytic activity">
    <reaction>
        <text>quercetin + O2 = 2-(3,4-dihydroxybenzoyloxy)-4,6-dihydroxybenzoate + CO</text>
        <dbReference type="Rhea" id="RHEA:15381"/>
        <dbReference type="ChEBI" id="CHEBI:15379"/>
        <dbReference type="ChEBI" id="CHEBI:17245"/>
        <dbReference type="ChEBI" id="CHEBI:57628"/>
        <dbReference type="ChEBI" id="CHEBI:57694"/>
        <dbReference type="EC" id="1.13.11.24"/>
    </reaction>
</comment>
<comment type="cofactor">
    <cofactor evidence="1">
        <name>a divalent metal cation</name>
        <dbReference type="ChEBI" id="CHEBI:60240"/>
    </cofactor>
    <text evidence="1">Binds 1 divalent metal cation.</text>
</comment>
<comment type="pathway">
    <text>Flavonoid metabolism; quercetin degradation.</text>
</comment>
<comment type="similarity">
    <text evidence="2">Belongs to the pirin family.</text>
</comment>
<dbReference type="EC" id="1.13.11.24"/>
<dbReference type="EMBL" id="LT708304">
    <property type="protein sequence ID" value="SIT98648.1"/>
    <property type="molecule type" value="Genomic_DNA"/>
</dbReference>
<dbReference type="RefSeq" id="NP_853852.1">
    <property type="nucleotide sequence ID" value="NC_002945.3"/>
</dbReference>
<dbReference type="RefSeq" id="WP_003401107.1">
    <property type="nucleotide sequence ID" value="NC_002945.4"/>
</dbReference>
<dbReference type="SMR" id="P65725"/>
<dbReference type="PATRIC" id="fig|233413.5.peg.211"/>
<dbReference type="UniPathway" id="UPA00724"/>
<dbReference type="Proteomes" id="UP000001419">
    <property type="component" value="Chromosome"/>
</dbReference>
<dbReference type="GO" id="GO:0046872">
    <property type="term" value="F:metal ion binding"/>
    <property type="evidence" value="ECO:0007669"/>
    <property type="project" value="UniProtKB-KW"/>
</dbReference>
<dbReference type="GO" id="GO:0008127">
    <property type="term" value="F:quercetin 2,3-dioxygenase activity"/>
    <property type="evidence" value="ECO:0007669"/>
    <property type="project" value="UniProtKB-EC"/>
</dbReference>
<dbReference type="CDD" id="cd02910">
    <property type="entry name" value="cupin_Yhhw_N"/>
    <property type="match status" value="1"/>
</dbReference>
<dbReference type="Gene3D" id="2.60.120.10">
    <property type="entry name" value="Jelly Rolls"/>
    <property type="match status" value="2"/>
</dbReference>
<dbReference type="InterPro" id="IPR012093">
    <property type="entry name" value="Pirin"/>
</dbReference>
<dbReference type="InterPro" id="IPR003829">
    <property type="entry name" value="Pirin_N_dom"/>
</dbReference>
<dbReference type="InterPro" id="IPR041602">
    <property type="entry name" value="Quercetinase_C"/>
</dbReference>
<dbReference type="InterPro" id="IPR014710">
    <property type="entry name" value="RmlC-like_jellyroll"/>
</dbReference>
<dbReference type="InterPro" id="IPR011051">
    <property type="entry name" value="RmlC_Cupin_sf"/>
</dbReference>
<dbReference type="PANTHER" id="PTHR43212">
    <property type="entry name" value="QUERCETIN 2,3-DIOXYGENASE"/>
    <property type="match status" value="1"/>
</dbReference>
<dbReference type="PANTHER" id="PTHR43212:SF3">
    <property type="entry name" value="QUERCETIN 2,3-DIOXYGENASE"/>
    <property type="match status" value="1"/>
</dbReference>
<dbReference type="Pfam" id="PF02678">
    <property type="entry name" value="Pirin"/>
    <property type="match status" value="1"/>
</dbReference>
<dbReference type="Pfam" id="PF17954">
    <property type="entry name" value="Pirin_C_2"/>
    <property type="match status" value="1"/>
</dbReference>
<dbReference type="PIRSF" id="PIRSF006232">
    <property type="entry name" value="Pirin"/>
    <property type="match status" value="1"/>
</dbReference>
<dbReference type="SUPFAM" id="SSF51182">
    <property type="entry name" value="RmlC-like cupins"/>
    <property type="match status" value="1"/>
</dbReference>
<proteinExistence type="inferred from homology"/>
<feature type="chain" id="PRO_0000214066" description="Putative quercetin 2,3-dioxygenase Mb0187c">
    <location>
        <begin position="1"/>
        <end position="244"/>
    </location>
</feature>
<feature type="binding site" evidence="1">
    <location>
        <position position="60"/>
    </location>
    <ligand>
        <name>a divalent metal cation</name>
        <dbReference type="ChEBI" id="CHEBI:60240"/>
    </ligand>
</feature>
<feature type="binding site" evidence="1">
    <location>
        <position position="62"/>
    </location>
    <ligand>
        <name>a divalent metal cation</name>
        <dbReference type="ChEBI" id="CHEBI:60240"/>
    </ligand>
</feature>
<feature type="binding site" evidence="1">
    <location>
        <position position="104"/>
    </location>
    <ligand>
        <name>a divalent metal cation</name>
        <dbReference type="ChEBI" id="CHEBI:60240"/>
    </ligand>
</feature>
<feature type="binding site" evidence="1">
    <location>
        <position position="106"/>
    </location>
    <ligand>
        <name>a divalent metal cation</name>
        <dbReference type="ChEBI" id="CHEBI:60240"/>
    </ligand>
</feature>